<organism>
    <name type="scientific">Mus musculus</name>
    <name type="common">Mouse</name>
    <dbReference type="NCBI Taxonomy" id="10090"/>
    <lineage>
        <taxon>Eukaryota</taxon>
        <taxon>Metazoa</taxon>
        <taxon>Chordata</taxon>
        <taxon>Craniata</taxon>
        <taxon>Vertebrata</taxon>
        <taxon>Euteleostomi</taxon>
        <taxon>Mammalia</taxon>
        <taxon>Eutheria</taxon>
        <taxon>Euarchontoglires</taxon>
        <taxon>Glires</taxon>
        <taxon>Rodentia</taxon>
        <taxon>Myomorpha</taxon>
        <taxon>Muroidea</taxon>
        <taxon>Muridae</taxon>
        <taxon>Murinae</taxon>
        <taxon>Mus</taxon>
        <taxon>Mus</taxon>
    </lineage>
</organism>
<proteinExistence type="evidence at protein level"/>
<sequence>MAQNVYGPGVRMGNWNEDVYLEEERMRHFLEKREKGELLIQRNRRVKKNILRPMQLSVSEDGYVHYGDKVIIVNPDQVLGEEAGKFMRGDLSLCMSPDEVKAQLSDDLEIPCGVSAVQTIAPMGRNTFTILSDGANSCEMGQVVVYGQNFCLGIAAGLEGKMLYLTSDHRTLLKSSLKSGLQEVTLTDEVTHLNCWQAAFLDPQLRLEYEGFPVRANEKIVIYHRHTNRALAVHRNLFLRTYFGKEMEVVAHTYLDSHKVEKPKNQWMLVTGNPRNKSNTMLDISKPITEDTRALEQAMGINT</sequence>
<reference key="1">
    <citation type="journal article" date="2005" name="Science">
        <title>The transcriptional landscape of the mammalian genome.</title>
        <authorList>
            <person name="Carninci P."/>
            <person name="Kasukawa T."/>
            <person name="Katayama S."/>
            <person name="Gough J."/>
            <person name="Frith M.C."/>
            <person name="Maeda N."/>
            <person name="Oyama R."/>
            <person name="Ravasi T."/>
            <person name="Lenhard B."/>
            <person name="Wells C."/>
            <person name="Kodzius R."/>
            <person name="Shimokawa K."/>
            <person name="Bajic V.B."/>
            <person name="Brenner S.E."/>
            <person name="Batalov S."/>
            <person name="Forrest A.R."/>
            <person name="Zavolan M."/>
            <person name="Davis M.J."/>
            <person name="Wilming L.G."/>
            <person name="Aidinis V."/>
            <person name="Allen J.E."/>
            <person name="Ambesi-Impiombato A."/>
            <person name="Apweiler R."/>
            <person name="Aturaliya R.N."/>
            <person name="Bailey T.L."/>
            <person name="Bansal M."/>
            <person name="Baxter L."/>
            <person name="Beisel K.W."/>
            <person name="Bersano T."/>
            <person name="Bono H."/>
            <person name="Chalk A.M."/>
            <person name="Chiu K.P."/>
            <person name="Choudhary V."/>
            <person name="Christoffels A."/>
            <person name="Clutterbuck D.R."/>
            <person name="Crowe M.L."/>
            <person name="Dalla E."/>
            <person name="Dalrymple B.P."/>
            <person name="de Bono B."/>
            <person name="Della Gatta G."/>
            <person name="di Bernardo D."/>
            <person name="Down T."/>
            <person name="Engstrom P."/>
            <person name="Fagiolini M."/>
            <person name="Faulkner G."/>
            <person name="Fletcher C.F."/>
            <person name="Fukushima T."/>
            <person name="Furuno M."/>
            <person name="Futaki S."/>
            <person name="Gariboldi M."/>
            <person name="Georgii-Hemming P."/>
            <person name="Gingeras T.R."/>
            <person name="Gojobori T."/>
            <person name="Green R.E."/>
            <person name="Gustincich S."/>
            <person name="Harbers M."/>
            <person name="Hayashi Y."/>
            <person name="Hensch T.K."/>
            <person name="Hirokawa N."/>
            <person name="Hill D."/>
            <person name="Huminiecki L."/>
            <person name="Iacono M."/>
            <person name="Ikeo K."/>
            <person name="Iwama A."/>
            <person name="Ishikawa T."/>
            <person name="Jakt M."/>
            <person name="Kanapin A."/>
            <person name="Katoh M."/>
            <person name="Kawasawa Y."/>
            <person name="Kelso J."/>
            <person name="Kitamura H."/>
            <person name="Kitano H."/>
            <person name="Kollias G."/>
            <person name="Krishnan S.P."/>
            <person name="Kruger A."/>
            <person name="Kummerfeld S.K."/>
            <person name="Kurochkin I.V."/>
            <person name="Lareau L.F."/>
            <person name="Lazarevic D."/>
            <person name="Lipovich L."/>
            <person name="Liu J."/>
            <person name="Liuni S."/>
            <person name="McWilliam S."/>
            <person name="Madan Babu M."/>
            <person name="Madera M."/>
            <person name="Marchionni L."/>
            <person name="Matsuda H."/>
            <person name="Matsuzawa S."/>
            <person name="Miki H."/>
            <person name="Mignone F."/>
            <person name="Miyake S."/>
            <person name="Morris K."/>
            <person name="Mottagui-Tabar S."/>
            <person name="Mulder N."/>
            <person name="Nakano N."/>
            <person name="Nakauchi H."/>
            <person name="Ng P."/>
            <person name="Nilsson R."/>
            <person name="Nishiguchi S."/>
            <person name="Nishikawa S."/>
            <person name="Nori F."/>
            <person name="Ohara O."/>
            <person name="Okazaki Y."/>
            <person name="Orlando V."/>
            <person name="Pang K.C."/>
            <person name="Pavan W.J."/>
            <person name="Pavesi G."/>
            <person name="Pesole G."/>
            <person name="Petrovsky N."/>
            <person name="Piazza S."/>
            <person name="Reed J."/>
            <person name="Reid J.F."/>
            <person name="Ring B.Z."/>
            <person name="Ringwald M."/>
            <person name="Rost B."/>
            <person name="Ruan Y."/>
            <person name="Salzberg S.L."/>
            <person name="Sandelin A."/>
            <person name="Schneider C."/>
            <person name="Schoenbach C."/>
            <person name="Sekiguchi K."/>
            <person name="Semple C.A."/>
            <person name="Seno S."/>
            <person name="Sessa L."/>
            <person name="Sheng Y."/>
            <person name="Shibata Y."/>
            <person name="Shimada H."/>
            <person name="Shimada K."/>
            <person name="Silva D."/>
            <person name="Sinclair B."/>
            <person name="Sperling S."/>
            <person name="Stupka E."/>
            <person name="Sugiura K."/>
            <person name="Sultana R."/>
            <person name="Takenaka Y."/>
            <person name="Taki K."/>
            <person name="Tammoja K."/>
            <person name="Tan S.L."/>
            <person name="Tang S."/>
            <person name="Taylor M.S."/>
            <person name="Tegner J."/>
            <person name="Teichmann S.A."/>
            <person name="Ueda H.R."/>
            <person name="van Nimwegen E."/>
            <person name="Verardo R."/>
            <person name="Wei C.L."/>
            <person name="Yagi K."/>
            <person name="Yamanishi H."/>
            <person name="Zabarovsky E."/>
            <person name="Zhu S."/>
            <person name="Zimmer A."/>
            <person name="Hide W."/>
            <person name="Bult C."/>
            <person name="Grimmond S.M."/>
            <person name="Teasdale R.D."/>
            <person name="Liu E.T."/>
            <person name="Brusic V."/>
            <person name="Quackenbush J."/>
            <person name="Wahlestedt C."/>
            <person name="Mattick J.S."/>
            <person name="Hume D.A."/>
            <person name="Kai C."/>
            <person name="Sasaki D."/>
            <person name="Tomaru Y."/>
            <person name="Fukuda S."/>
            <person name="Kanamori-Katayama M."/>
            <person name="Suzuki M."/>
            <person name="Aoki J."/>
            <person name="Arakawa T."/>
            <person name="Iida J."/>
            <person name="Imamura K."/>
            <person name="Itoh M."/>
            <person name="Kato T."/>
            <person name="Kawaji H."/>
            <person name="Kawagashira N."/>
            <person name="Kawashima T."/>
            <person name="Kojima M."/>
            <person name="Kondo S."/>
            <person name="Konno H."/>
            <person name="Nakano K."/>
            <person name="Ninomiya N."/>
            <person name="Nishio T."/>
            <person name="Okada M."/>
            <person name="Plessy C."/>
            <person name="Shibata K."/>
            <person name="Shiraki T."/>
            <person name="Suzuki S."/>
            <person name="Tagami M."/>
            <person name="Waki K."/>
            <person name="Watahiki A."/>
            <person name="Okamura-Oho Y."/>
            <person name="Suzuki H."/>
            <person name="Kawai J."/>
            <person name="Hayashizaki Y."/>
        </authorList>
    </citation>
    <scope>NUCLEOTIDE SEQUENCE [LARGE SCALE MRNA]</scope>
    <source>
        <strain>C57BL/6J</strain>
        <tissue>Testis</tissue>
    </source>
</reference>
<reference key="2">
    <citation type="journal article" date="2004" name="Genome Res.">
        <title>The status, quality, and expansion of the NIH full-length cDNA project: the Mammalian Gene Collection (MGC).</title>
        <authorList>
            <consortium name="The MGC Project Team"/>
        </authorList>
    </citation>
    <scope>NUCLEOTIDE SEQUENCE [LARGE SCALE MRNA]</scope>
    <source>
        <tissue>Testis</tissue>
    </source>
</reference>
<reference key="3">
    <citation type="journal article" date="2010" name="Cell">
        <title>A tissue-specific atlas of mouse protein phosphorylation and expression.</title>
        <authorList>
            <person name="Huttlin E.L."/>
            <person name="Jedrychowski M.P."/>
            <person name="Elias J.E."/>
            <person name="Goswami T."/>
            <person name="Rad R."/>
            <person name="Beausoleil S.A."/>
            <person name="Villen J."/>
            <person name="Haas W."/>
            <person name="Sowa M.E."/>
            <person name="Gygi S.P."/>
        </authorList>
    </citation>
    <scope>IDENTIFICATION BY MASS SPECTROMETRY [LARGE SCALE ANALYSIS]</scope>
    <source>
        <tissue>Testis</tissue>
    </source>
</reference>
<reference evidence="8" key="4">
    <citation type="journal article" date="2023" name="Cell">
        <title>Structures of sperm flagellar doublet microtubules expand the genetic spectrum of male infertility.</title>
        <authorList>
            <person name="Zhou L."/>
            <person name="Liu H."/>
            <person name="Liu S."/>
            <person name="Yang X."/>
            <person name="Dong Y."/>
            <person name="Pan Y."/>
            <person name="Xiao Z."/>
            <person name="Zheng B."/>
            <person name="Sun Y."/>
            <person name="Huang P."/>
            <person name="Zhang X."/>
            <person name="Hu J."/>
            <person name="Sun R."/>
            <person name="Feng S."/>
            <person name="Zhu Y."/>
            <person name="Liu M."/>
            <person name="Gui M."/>
            <person name="Wu J."/>
        </authorList>
    </citation>
    <scope>STRUCTURE BY ELECTRON MICROSCOPY (3.50 ANGSTROMS) OF SPERM FLAGELLAR DOUBLET MICROTUBULES</scope>
    <scope>FUNCTION</scope>
    <scope>SUBCELLULAR LOCATION</scope>
    <scope>SUBUNIT</scope>
</reference>
<reference evidence="9" key="5">
    <citation type="journal article" date="2023" name="Cell">
        <title>De novo protein identification in mammalian sperm using in situ cryoelectron tomography and AlphaFold2 docking.</title>
        <authorList>
            <person name="Chen Z."/>
            <person name="Shiozaki M."/>
            <person name="Haas K.M."/>
            <person name="Skinner W.M."/>
            <person name="Zhao S."/>
            <person name="Guo C."/>
            <person name="Polacco B.J."/>
            <person name="Yu Z."/>
            <person name="Krogan N.J."/>
            <person name="Lishko P.V."/>
            <person name="Kaake R.M."/>
            <person name="Vale R.D."/>
            <person name="Agard D.A."/>
        </authorList>
    </citation>
    <scope>STRUCTURE BY ELECTRON MICROSCOPY (7.70 ANGSTROMS) OF SPERM FLAGELLAR DOUBLET MICROTUBULES</scope>
    <scope>FUNCTION</scope>
    <scope>SUBCELLULAR LOCATION</scope>
    <scope>SUBUNIT</scope>
</reference>
<reference evidence="7" key="6">
    <citation type="journal article" date="2023" name="Cell Discov.">
        <title>In-cell structural insight into the stability of sperm microtubule doublet.</title>
        <authorList>
            <person name="Tai L."/>
            <person name="Yin G."/>
            <person name="Huang X."/>
            <person name="Sun F."/>
            <person name="Zhu Y."/>
        </authorList>
    </citation>
    <scope>STRUCTURE BY ELECTRON MICROSCOPY (4.50 ANGSTROMS)</scope>
    <scope>FUNCTION</scope>
    <scope>SUBUNIT</scope>
    <scope>SUBCELLULAR LOCATION</scope>
</reference>
<gene>
    <name evidence="6" type="primary">Cfap161</name>
</gene>
<protein>
    <recommendedName>
        <fullName evidence="6">Cilia- and flagella-associated protein 161</fullName>
    </recommendedName>
</protein>
<dbReference type="EMBL" id="AK006375">
    <property type="protein sequence ID" value="BAB24555.1"/>
    <property type="molecule type" value="mRNA"/>
</dbReference>
<dbReference type="EMBL" id="BC061016">
    <property type="protein sequence ID" value="AAH61016.1"/>
    <property type="molecule type" value="mRNA"/>
</dbReference>
<dbReference type="CCDS" id="CCDS21413.1"/>
<dbReference type="RefSeq" id="NP_083611.2">
    <property type="nucleotide sequence ID" value="NM_029335.3"/>
</dbReference>
<dbReference type="RefSeq" id="XP_006508354.1">
    <property type="nucleotide sequence ID" value="XM_006508291.4"/>
</dbReference>
<dbReference type="PDB" id="8I7R">
    <property type="method" value="EM"/>
    <property type="resolution" value="6.50 A"/>
    <property type="chains" value="K/L=1-303"/>
</dbReference>
<dbReference type="PDB" id="8IYJ">
    <property type="method" value="EM"/>
    <property type="resolution" value="3.50 A"/>
    <property type="chains" value="E/F/N2=1-303"/>
</dbReference>
<dbReference type="PDB" id="8TO0">
    <property type="method" value="EM"/>
    <property type="resolution" value="7.70 A"/>
    <property type="chains" value="Ay/BH=1-303"/>
</dbReference>
<dbReference type="PDBsum" id="8I7R"/>
<dbReference type="PDBsum" id="8IYJ"/>
<dbReference type="PDBsum" id="8TO0"/>
<dbReference type="EMDB" id="EMD-35230"/>
<dbReference type="EMDB" id="EMD-35823"/>
<dbReference type="EMDB" id="EMD-41431"/>
<dbReference type="SMR" id="Q6P8Y0"/>
<dbReference type="FunCoup" id="Q6P8Y0">
    <property type="interactions" value="49"/>
</dbReference>
<dbReference type="STRING" id="10090.ENSMUSP00000011298"/>
<dbReference type="iPTMnet" id="Q6P8Y0"/>
<dbReference type="PhosphoSitePlus" id="Q6P8Y0"/>
<dbReference type="SwissPalm" id="Q6P8Y0"/>
<dbReference type="PaxDb" id="10090-ENSMUSP00000011298"/>
<dbReference type="ProteomicsDB" id="280083"/>
<dbReference type="Antibodypedia" id="27916">
    <property type="antibodies" value="42 antibodies from 15 providers"/>
</dbReference>
<dbReference type="Ensembl" id="ENSMUST00000011298.14">
    <property type="protein sequence ID" value="ENSMUSP00000011298.8"/>
    <property type="gene ID" value="ENSMUSG00000011154.18"/>
</dbReference>
<dbReference type="GeneID" id="75556"/>
<dbReference type="KEGG" id="mmu:75556"/>
<dbReference type="UCSC" id="uc009idv.2">
    <property type="organism name" value="mouse"/>
</dbReference>
<dbReference type="AGR" id="MGI:1922806"/>
<dbReference type="CTD" id="161502"/>
<dbReference type="MGI" id="MGI:1922806">
    <property type="gene designation" value="Cfap161"/>
</dbReference>
<dbReference type="VEuPathDB" id="HostDB:ENSMUSG00000011154"/>
<dbReference type="eggNOG" id="ENOG502QRDA">
    <property type="taxonomic scope" value="Eukaryota"/>
</dbReference>
<dbReference type="GeneTree" id="ENSGT00390000018488"/>
<dbReference type="HOGENOM" id="CLU_080458_0_0_1"/>
<dbReference type="InParanoid" id="Q6P8Y0"/>
<dbReference type="OMA" id="IIHCKTN"/>
<dbReference type="OrthoDB" id="2126411at2759"/>
<dbReference type="PhylomeDB" id="Q6P8Y0"/>
<dbReference type="BioGRID-ORCS" id="75556">
    <property type="hits" value="3 hits in 44 CRISPR screens"/>
</dbReference>
<dbReference type="PRO" id="PR:Q6P8Y0"/>
<dbReference type="Proteomes" id="UP000000589">
    <property type="component" value="Chromosome 7"/>
</dbReference>
<dbReference type="RNAct" id="Q6P8Y0">
    <property type="molecule type" value="protein"/>
</dbReference>
<dbReference type="Bgee" id="ENSMUSG00000011154">
    <property type="expression patterns" value="Expressed in spermatid and 58 other cell types or tissues"/>
</dbReference>
<dbReference type="ExpressionAtlas" id="Q6P8Y0">
    <property type="expression patterns" value="baseline and differential"/>
</dbReference>
<dbReference type="GO" id="GO:0160111">
    <property type="term" value="C:axonemal A tubule inner sheath"/>
    <property type="evidence" value="ECO:0000314"/>
    <property type="project" value="UniProtKB"/>
</dbReference>
<dbReference type="GO" id="GO:0005879">
    <property type="term" value="C:axonemal microtubule"/>
    <property type="evidence" value="ECO:0000250"/>
    <property type="project" value="UniProtKB"/>
</dbReference>
<dbReference type="GO" id="GO:0036126">
    <property type="term" value="C:sperm flagellum"/>
    <property type="evidence" value="ECO:0000314"/>
    <property type="project" value="UniProtKB"/>
</dbReference>
<dbReference type="GO" id="GO:0030317">
    <property type="term" value="P:flagellated sperm motility"/>
    <property type="evidence" value="ECO:0000314"/>
    <property type="project" value="UniProtKB"/>
</dbReference>
<dbReference type="Gene3D" id="2.80.10.50">
    <property type="match status" value="1"/>
</dbReference>
<dbReference type="InterPro" id="IPR055325">
    <property type="entry name" value="CF161"/>
</dbReference>
<dbReference type="InterPro" id="IPR036300">
    <property type="entry name" value="MIR_dom_sf"/>
</dbReference>
<dbReference type="PANTHER" id="PTHR24274">
    <property type="entry name" value="CILIA- AND FLAGELLA-ASSOCIATED PROTEIN 161"/>
    <property type="match status" value="1"/>
</dbReference>
<dbReference type="PANTHER" id="PTHR24274:SF1">
    <property type="entry name" value="CILIA- AND FLAGELLA-ASSOCIATED PROTEIN 161"/>
    <property type="match status" value="1"/>
</dbReference>
<dbReference type="Pfam" id="PF24569">
    <property type="entry name" value="CFAP161"/>
    <property type="match status" value="1"/>
</dbReference>
<dbReference type="SUPFAM" id="SSF82109">
    <property type="entry name" value="MIR domain"/>
    <property type="match status" value="1"/>
</dbReference>
<evidence type="ECO:0000250" key="1">
    <source>
        <dbReference type="UniProtKB" id="F6RJC2"/>
    </source>
</evidence>
<evidence type="ECO:0000269" key="2">
    <source>
    </source>
</evidence>
<evidence type="ECO:0000269" key="3">
    <source>
    </source>
</evidence>
<evidence type="ECO:0000269" key="4">
    <source>
    </source>
</evidence>
<evidence type="ECO:0000305" key="5"/>
<evidence type="ECO:0000312" key="6">
    <source>
        <dbReference type="MGI" id="MGI:1922806"/>
    </source>
</evidence>
<evidence type="ECO:0007744" key="7">
    <source>
        <dbReference type="PDB" id="8I7R"/>
    </source>
</evidence>
<evidence type="ECO:0007744" key="8">
    <source>
        <dbReference type="PDB" id="8IYJ"/>
    </source>
</evidence>
<evidence type="ECO:0007744" key="9">
    <source>
        <dbReference type="PDB" id="8TO0"/>
    </source>
</evidence>
<feature type="chain" id="PRO_0000244093" description="Cilia- and flagella-associated protein 161">
    <location>
        <begin position="1"/>
        <end position="303"/>
    </location>
</feature>
<feature type="sequence conflict" description="In Ref. 1; BAB24555." evidence="5" ref="1">
    <original>L</original>
    <variation>M</variation>
    <location>
        <position position="177"/>
    </location>
</feature>
<name>CF161_MOUSE</name>
<comment type="function">
    <text evidence="2 3 4">Microtubule inner protein (MIP) part of the dynein-decorated doublet microtubules (DMTs) in cilia axoneme, which is required for motile cilia beating.</text>
</comment>
<comment type="subunit">
    <text evidence="2 3 4">Microtubule inner protein component of sperm flagellar doublet microtubules.</text>
</comment>
<comment type="subcellular location">
    <subcellularLocation>
        <location evidence="1">Cytoplasm</location>
        <location evidence="1">Cytoskeleton</location>
        <location evidence="1">Cilium axoneme</location>
    </subcellularLocation>
    <subcellularLocation>
        <location evidence="2 3 4">Cytoplasm</location>
        <location evidence="2 3 4">Cytoskeleton</location>
        <location evidence="2 3 4">Flagellum axoneme</location>
    </subcellularLocation>
</comment>
<accession>Q6P8Y0</accession>
<accession>Q9D9X1</accession>
<keyword id="KW-0002">3D-structure</keyword>
<keyword id="KW-0966">Cell projection</keyword>
<keyword id="KW-0969">Cilium</keyword>
<keyword id="KW-0963">Cytoplasm</keyword>
<keyword id="KW-0206">Cytoskeleton</keyword>
<keyword id="KW-0282">Flagellum</keyword>
<keyword id="KW-1185">Reference proteome</keyword>